<evidence type="ECO:0000250" key="1">
    <source>
        <dbReference type="UniProtKB" id="P0AFH2"/>
    </source>
</evidence>
<evidence type="ECO:0000255" key="2"/>
<evidence type="ECO:0000255" key="3">
    <source>
        <dbReference type="PROSITE-ProRule" id="PRU00441"/>
    </source>
</evidence>
<evidence type="ECO:0000305" key="4"/>
<accession>P0AFH3</accession>
<accession>P31132</accession>
<accession>P76026</accession>
<accession>P77550</accession>
<keyword id="KW-0997">Cell inner membrane</keyword>
<keyword id="KW-1003">Cell membrane</keyword>
<keyword id="KW-0472">Membrane</keyword>
<keyword id="KW-0571">Peptide transport</keyword>
<keyword id="KW-0653">Protein transport</keyword>
<keyword id="KW-1185">Reference proteome</keyword>
<keyword id="KW-0812">Transmembrane</keyword>
<keyword id="KW-1133">Transmembrane helix</keyword>
<keyword id="KW-0813">Transport</keyword>
<reference key="1">
    <citation type="journal article" date="2002" name="Proc. Natl. Acad. Sci. U.S.A.">
        <title>Extensive mosaic structure revealed by the complete genome sequence of uropathogenic Escherichia coli.</title>
        <authorList>
            <person name="Welch R.A."/>
            <person name="Burland V."/>
            <person name="Plunkett G. III"/>
            <person name="Redford P."/>
            <person name="Roesch P."/>
            <person name="Rasko D."/>
            <person name="Buckles E.L."/>
            <person name="Liou S.-R."/>
            <person name="Boutin A."/>
            <person name="Hackett J."/>
            <person name="Stroud D."/>
            <person name="Mayhew G.F."/>
            <person name="Rose D.J."/>
            <person name="Zhou S."/>
            <person name="Schwartz D.C."/>
            <person name="Perna N.T."/>
            <person name="Mobley H.L.T."/>
            <person name="Donnenberg M.S."/>
            <person name="Blattner F.R."/>
        </authorList>
    </citation>
    <scope>NUCLEOTIDE SEQUENCE [LARGE SCALE GENOMIC DNA]</scope>
    <source>
        <strain>CFT073 / ATCC 700928 / UPEC</strain>
    </source>
</reference>
<organism>
    <name type="scientific">Escherichia coli O6:H1 (strain CFT073 / ATCC 700928 / UPEC)</name>
    <dbReference type="NCBI Taxonomy" id="199310"/>
    <lineage>
        <taxon>Bacteria</taxon>
        <taxon>Pseudomonadati</taxon>
        <taxon>Pseudomonadota</taxon>
        <taxon>Gammaproteobacteria</taxon>
        <taxon>Enterobacterales</taxon>
        <taxon>Enterobacteriaceae</taxon>
        <taxon>Escherichia</taxon>
    </lineage>
</organism>
<name>OPPB_ECOL6</name>
<sequence>MLKFILRRCLEAIPTLFILITISFFMMRLAPGSPFTGERTLPPEVMANIEAKYHLNDPIMTQYFSYLKQLAHGDFGPSFKYKDYSVNDLVASSFPVSAKLGAAAFFLAVILGVSAGVIAALKQNTKWDYTVMGLAMTGVVIPSFVVAPLLVMIFAIILHWLPGGGWNGGALKFMILPMVALSLAYIASIARITRGSMIEVLHSNFIRTARAKGLPMRRIILRHALKPALLPVLSYMGPAFVGIITGSMVIETIYGLPGIGQLFVNGALNRDYSLVLSLTILVGALTILFNAIVDVLYAVIDPKIRY</sequence>
<dbReference type="EMBL" id="AE014075">
    <property type="protein sequence ID" value="AAN80175.1"/>
    <property type="molecule type" value="Genomic_DNA"/>
</dbReference>
<dbReference type="RefSeq" id="WP_000911112.1">
    <property type="nucleotide sequence ID" value="NZ_CP051263.1"/>
</dbReference>
<dbReference type="SMR" id="P0AFH3"/>
<dbReference type="STRING" id="199310.c1708"/>
<dbReference type="GeneID" id="75203356"/>
<dbReference type="KEGG" id="ecc:c1708"/>
<dbReference type="eggNOG" id="COG0601">
    <property type="taxonomic scope" value="Bacteria"/>
</dbReference>
<dbReference type="HOGENOM" id="CLU_036879_0_0_6"/>
<dbReference type="BioCyc" id="ECOL199310:C1708-MONOMER"/>
<dbReference type="Proteomes" id="UP000001410">
    <property type="component" value="Chromosome"/>
</dbReference>
<dbReference type="GO" id="GO:0005886">
    <property type="term" value="C:plasma membrane"/>
    <property type="evidence" value="ECO:0007669"/>
    <property type="project" value="UniProtKB-SubCell"/>
</dbReference>
<dbReference type="GO" id="GO:0015833">
    <property type="term" value="P:peptide transport"/>
    <property type="evidence" value="ECO:0007669"/>
    <property type="project" value="UniProtKB-KW"/>
</dbReference>
<dbReference type="GO" id="GO:0015031">
    <property type="term" value="P:protein transport"/>
    <property type="evidence" value="ECO:0007669"/>
    <property type="project" value="UniProtKB-KW"/>
</dbReference>
<dbReference type="GO" id="GO:0055085">
    <property type="term" value="P:transmembrane transport"/>
    <property type="evidence" value="ECO:0007669"/>
    <property type="project" value="InterPro"/>
</dbReference>
<dbReference type="CDD" id="cd06261">
    <property type="entry name" value="TM_PBP2"/>
    <property type="match status" value="1"/>
</dbReference>
<dbReference type="FunFam" id="1.10.3720.10:FF:000016">
    <property type="entry name" value="Oligopeptide transport system permease OppB"/>
    <property type="match status" value="1"/>
</dbReference>
<dbReference type="Gene3D" id="1.10.3720.10">
    <property type="entry name" value="MetI-like"/>
    <property type="match status" value="1"/>
</dbReference>
<dbReference type="InterPro" id="IPR045621">
    <property type="entry name" value="BPD_transp_1_N"/>
</dbReference>
<dbReference type="InterPro" id="IPR000515">
    <property type="entry name" value="MetI-like"/>
</dbReference>
<dbReference type="InterPro" id="IPR035906">
    <property type="entry name" value="MetI-like_sf"/>
</dbReference>
<dbReference type="NCBIfam" id="NF007008">
    <property type="entry name" value="PRK09471.1"/>
    <property type="match status" value="1"/>
</dbReference>
<dbReference type="PANTHER" id="PTHR43163">
    <property type="entry name" value="DIPEPTIDE TRANSPORT SYSTEM PERMEASE PROTEIN DPPB-RELATED"/>
    <property type="match status" value="1"/>
</dbReference>
<dbReference type="PANTHER" id="PTHR43163:SF6">
    <property type="entry name" value="DIPEPTIDE TRANSPORT SYSTEM PERMEASE PROTEIN DPPB-RELATED"/>
    <property type="match status" value="1"/>
</dbReference>
<dbReference type="Pfam" id="PF00528">
    <property type="entry name" value="BPD_transp_1"/>
    <property type="match status" value="1"/>
</dbReference>
<dbReference type="Pfam" id="PF19300">
    <property type="entry name" value="BPD_transp_1_N"/>
    <property type="match status" value="1"/>
</dbReference>
<dbReference type="SUPFAM" id="SSF161098">
    <property type="entry name" value="MetI-like"/>
    <property type="match status" value="1"/>
</dbReference>
<dbReference type="PROSITE" id="PS50928">
    <property type="entry name" value="ABC_TM1"/>
    <property type="match status" value="1"/>
</dbReference>
<proteinExistence type="inferred from homology"/>
<feature type="chain" id="PRO_0000060145" description="Oligopeptide transport system permease protein OppB">
    <location>
        <begin position="1"/>
        <end position="306"/>
    </location>
</feature>
<feature type="topological domain" description="Cytoplasmic" evidence="4">
    <location>
        <begin position="1"/>
        <end position="11"/>
    </location>
</feature>
<feature type="transmembrane region" description="Helical" evidence="2">
    <location>
        <begin position="12"/>
        <end position="32"/>
    </location>
</feature>
<feature type="topological domain" description="Periplasmic" evidence="4">
    <location>
        <begin position="33"/>
        <end position="99"/>
    </location>
</feature>
<feature type="transmembrane region" description="Helical" evidence="2">
    <location>
        <begin position="100"/>
        <end position="120"/>
    </location>
</feature>
<feature type="topological domain" description="Cytoplasmic" evidence="4">
    <location>
        <begin position="121"/>
        <end position="137"/>
    </location>
</feature>
<feature type="transmembrane region" description="Helical" evidence="2">
    <location>
        <begin position="138"/>
        <end position="158"/>
    </location>
</feature>
<feature type="topological domain" description="Periplasmic" evidence="4">
    <location>
        <begin position="159"/>
        <end position="169"/>
    </location>
</feature>
<feature type="transmembrane region" description="Helical" evidence="2">
    <location>
        <begin position="170"/>
        <end position="190"/>
    </location>
</feature>
<feature type="topological domain" description="Cytoplasmic" evidence="4">
    <location>
        <begin position="191"/>
        <end position="229"/>
    </location>
</feature>
<feature type="transmembrane region" description="Helical" evidence="2">
    <location>
        <begin position="230"/>
        <end position="250"/>
    </location>
</feature>
<feature type="topological domain" description="Periplasmic" evidence="4">
    <location>
        <begin position="251"/>
        <end position="279"/>
    </location>
</feature>
<feature type="transmembrane region" description="Helical" evidence="2">
    <location>
        <begin position="280"/>
        <end position="300"/>
    </location>
</feature>
<feature type="topological domain" description="Cytoplasmic" evidence="1">
    <location>
        <begin position="301"/>
        <end position="306"/>
    </location>
</feature>
<feature type="domain" description="ABC transmembrane type-1" evidence="3">
    <location>
        <begin position="94"/>
        <end position="293"/>
    </location>
</feature>
<gene>
    <name type="primary">oppB</name>
    <name type="ordered locus">c1708</name>
</gene>
<comment type="function">
    <text evidence="1">Part of the ABC transporter complex OppABCDF involved in the uptake of oligopeptides (By similarity). Probably responsible for the translocation of the substrate across the membrane (By similarity).</text>
</comment>
<comment type="subunit">
    <text evidence="1">The complex is composed of two ATP-binding proteins (OppD and OppF), two transmembrane proteins (OppB and OppC) and a solute-binding protein (OppA).</text>
</comment>
<comment type="subcellular location">
    <subcellularLocation>
        <location evidence="1">Cell inner membrane</location>
        <topology evidence="2">Multi-pass membrane protein</topology>
    </subcellularLocation>
</comment>
<comment type="similarity">
    <text evidence="4">Belongs to the binding-protein-dependent transport system permease family. OppBC subfamily.</text>
</comment>
<protein>
    <recommendedName>
        <fullName evidence="4">Oligopeptide transport system permease protein OppB</fullName>
    </recommendedName>
</protein>